<sequence>MAECVVHDWQGKEAGKASLELKVSKETTAVDLMHRAVLRQQAHSRQGTASTLTRAEVRGGGRKPYKQKGTGRARQGTIRTPLRPGGGIIFGPKPRTYNLAMNRKERRLALRTALMARLEDVIVVKDFGDSLKAPKTREISDALVRLGVAADAKVLIILSTPSEIIRRSVRNLEKVKLIAADQLNVFDLLHANSLVLSEEALAKIQEVYGDD</sequence>
<protein>
    <recommendedName>
        <fullName evidence="1">Large ribosomal subunit protein uL4</fullName>
    </recommendedName>
    <alternativeName>
        <fullName evidence="3">50S ribosomal protein L4</fullName>
    </alternativeName>
</protein>
<accession>A2CC28</accession>
<name>RL4_PROM3</name>
<reference key="1">
    <citation type="journal article" date="2007" name="PLoS Genet.">
        <title>Patterns and implications of gene gain and loss in the evolution of Prochlorococcus.</title>
        <authorList>
            <person name="Kettler G.C."/>
            <person name="Martiny A.C."/>
            <person name="Huang K."/>
            <person name="Zucker J."/>
            <person name="Coleman M.L."/>
            <person name="Rodrigue S."/>
            <person name="Chen F."/>
            <person name="Lapidus A."/>
            <person name="Ferriera S."/>
            <person name="Johnson J."/>
            <person name="Steglich C."/>
            <person name="Church G.M."/>
            <person name="Richardson P."/>
            <person name="Chisholm S.W."/>
        </authorList>
    </citation>
    <scope>NUCLEOTIDE SEQUENCE [LARGE SCALE GENOMIC DNA]</scope>
    <source>
        <strain>MIT 9303</strain>
    </source>
</reference>
<gene>
    <name evidence="1" type="primary">rplD</name>
    <name evidence="1" type="synonym">rpl4</name>
    <name type="ordered locus">P9303_23031</name>
</gene>
<feature type="chain" id="PRO_1000052465" description="Large ribosomal subunit protein uL4">
    <location>
        <begin position="1"/>
        <end position="211"/>
    </location>
</feature>
<feature type="region of interest" description="Disordered" evidence="2">
    <location>
        <begin position="41"/>
        <end position="78"/>
    </location>
</feature>
<feature type="compositionally biased region" description="Polar residues" evidence="2">
    <location>
        <begin position="41"/>
        <end position="53"/>
    </location>
</feature>
<feature type="compositionally biased region" description="Basic residues" evidence="2">
    <location>
        <begin position="60"/>
        <end position="71"/>
    </location>
</feature>
<organism>
    <name type="scientific">Prochlorococcus marinus (strain MIT 9303)</name>
    <dbReference type="NCBI Taxonomy" id="59922"/>
    <lineage>
        <taxon>Bacteria</taxon>
        <taxon>Bacillati</taxon>
        <taxon>Cyanobacteriota</taxon>
        <taxon>Cyanophyceae</taxon>
        <taxon>Synechococcales</taxon>
        <taxon>Prochlorococcaceae</taxon>
        <taxon>Prochlorococcus</taxon>
    </lineage>
</organism>
<proteinExistence type="inferred from homology"/>
<comment type="function">
    <text evidence="1">One of the primary rRNA binding proteins, this protein initially binds near the 5'-end of the 23S rRNA. It is important during the early stages of 50S assembly. It makes multiple contacts with different domains of the 23S rRNA in the assembled 50S subunit and ribosome.</text>
</comment>
<comment type="function">
    <text evidence="1">Forms part of the polypeptide exit tunnel.</text>
</comment>
<comment type="subunit">
    <text evidence="1">Part of the 50S ribosomal subunit.</text>
</comment>
<comment type="similarity">
    <text evidence="1">Belongs to the universal ribosomal protein uL4 family.</text>
</comment>
<keyword id="KW-0687">Ribonucleoprotein</keyword>
<keyword id="KW-0689">Ribosomal protein</keyword>
<keyword id="KW-0694">RNA-binding</keyword>
<keyword id="KW-0699">rRNA-binding</keyword>
<evidence type="ECO:0000255" key="1">
    <source>
        <dbReference type="HAMAP-Rule" id="MF_01328"/>
    </source>
</evidence>
<evidence type="ECO:0000256" key="2">
    <source>
        <dbReference type="SAM" id="MobiDB-lite"/>
    </source>
</evidence>
<evidence type="ECO:0000305" key="3"/>
<dbReference type="EMBL" id="CP000554">
    <property type="protein sequence ID" value="ABM79038.1"/>
    <property type="molecule type" value="Genomic_DNA"/>
</dbReference>
<dbReference type="RefSeq" id="WP_011826906.1">
    <property type="nucleotide sequence ID" value="NC_008820.1"/>
</dbReference>
<dbReference type="SMR" id="A2CC28"/>
<dbReference type="STRING" id="59922.P9303_23031"/>
<dbReference type="KEGG" id="pmf:P9303_23031"/>
<dbReference type="HOGENOM" id="CLU_041575_5_2_3"/>
<dbReference type="BioCyc" id="PMAR59922:G1G80-2020-MONOMER"/>
<dbReference type="Proteomes" id="UP000002274">
    <property type="component" value="Chromosome"/>
</dbReference>
<dbReference type="GO" id="GO:1990904">
    <property type="term" value="C:ribonucleoprotein complex"/>
    <property type="evidence" value="ECO:0007669"/>
    <property type="project" value="UniProtKB-KW"/>
</dbReference>
<dbReference type="GO" id="GO:0005840">
    <property type="term" value="C:ribosome"/>
    <property type="evidence" value="ECO:0007669"/>
    <property type="project" value="UniProtKB-KW"/>
</dbReference>
<dbReference type="GO" id="GO:0019843">
    <property type="term" value="F:rRNA binding"/>
    <property type="evidence" value="ECO:0007669"/>
    <property type="project" value="UniProtKB-UniRule"/>
</dbReference>
<dbReference type="GO" id="GO:0003735">
    <property type="term" value="F:structural constituent of ribosome"/>
    <property type="evidence" value="ECO:0007669"/>
    <property type="project" value="InterPro"/>
</dbReference>
<dbReference type="GO" id="GO:0006412">
    <property type="term" value="P:translation"/>
    <property type="evidence" value="ECO:0007669"/>
    <property type="project" value="UniProtKB-UniRule"/>
</dbReference>
<dbReference type="Gene3D" id="3.40.1370.10">
    <property type="match status" value="1"/>
</dbReference>
<dbReference type="HAMAP" id="MF_01328_B">
    <property type="entry name" value="Ribosomal_uL4_B"/>
    <property type="match status" value="1"/>
</dbReference>
<dbReference type="InterPro" id="IPR002136">
    <property type="entry name" value="Ribosomal_uL4"/>
</dbReference>
<dbReference type="InterPro" id="IPR013005">
    <property type="entry name" value="Ribosomal_uL4-like"/>
</dbReference>
<dbReference type="InterPro" id="IPR023574">
    <property type="entry name" value="Ribosomal_uL4_dom_sf"/>
</dbReference>
<dbReference type="NCBIfam" id="TIGR03953">
    <property type="entry name" value="rplD_bact"/>
    <property type="match status" value="1"/>
</dbReference>
<dbReference type="PANTHER" id="PTHR10746">
    <property type="entry name" value="50S RIBOSOMAL PROTEIN L4"/>
    <property type="match status" value="1"/>
</dbReference>
<dbReference type="PANTHER" id="PTHR10746:SF17">
    <property type="entry name" value="LARGE RIBOSOMAL SUBUNIT PROTEIN UL4C"/>
    <property type="match status" value="1"/>
</dbReference>
<dbReference type="Pfam" id="PF00573">
    <property type="entry name" value="Ribosomal_L4"/>
    <property type="match status" value="1"/>
</dbReference>
<dbReference type="SUPFAM" id="SSF52166">
    <property type="entry name" value="Ribosomal protein L4"/>
    <property type="match status" value="1"/>
</dbReference>